<proteinExistence type="inferred from homology"/>
<keyword id="KW-0238">DNA-binding</keyword>
<keyword id="KW-0479">Metal-binding</keyword>
<keyword id="KW-0533">Nickel</keyword>
<keyword id="KW-0804">Transcription</keyword>
<keyword id="KW-0805">Transcription regulation</keyword>
<gene>
    <name type="ordered locus">RPA4756</name>
</gene>
<name>NIKR_RHOPA</name>
<protein>
    <recommendedName>
        <fullName evidence="1">Putative nickel-responsive regulator</fullName>
    </recommendedName>
</protein>
<accession>Q6N0K6</accession>
<reference key="1">
    <citation type="journal article" date="2004" name="Nat. Biotechnol.">
        <title>Complete genome sequence of the metabolically versatile photosynthetic bacterium Rhodopseudomonas palustris.</title>
        <authorList>
            <person name="Larimer F.W."/>
            <person name="Chain P."/>
            <person name="Hauser L."/>
            <person name="Lamerdin J.E."/>
            <person name="Malfatti S."/>
            <person name="Do L."/>
            <person name="Land M.L."/>
            <person name="Pelletier D.A."/>
            <person name="Beatty J.T."/>
            <person name="Lang A.S."/>
            <person name="Tabita F.R."/>
            <person name="Gibson J.L."/>
            <person name="Hanson T.E."/>
            <person name="Bobst C."/>
            <person name="Torres y Torres J.L."/>
            <person name="Peres C."/>
            <person name="Harrison F.H."/>
            <person name="Gibson J."/>
            <person name="Harwood C.S."/>
        </authorList>
    </citation>
    <scope>NUCLEOTIDE SEQUENCE [LARGE SCALE GENOMIC DNA]</scope>
    <source>
        <strain>ATCC BAA-98 / CGA009</strain>
    </source>
</reference>
<dbReference type="EMBL" id="BX572608">
    <property type="protein sequence ID" value="CAE30196.1"/>
    <property type="molecule type" value="Genomic_DNA"/>
</dbReference>
<dbReference type="RefSeq" id="WP_011160288.1">
    <property type="nucleotide sequence ID" value="NZ_CP116810.1"/>
</dbReference>
<dbReference type="SMR" id="Q6N0K6"/>
<dbReference type="STRING" id="258594.RPA4756"/>
<dbReference type="GeneID" id="66895916"/>
<dbReference type="eggNOG" id="COG0864">
    <property type="taxonomic scope" value="Bacteria"/>
</dbReference>
<dbReference type="HOGENOM" id="CLU_113319_1_4_5"/>
<dbReference type="PhylomeDB" id="Q6N0K6"/>
<dbReference type="GO" id="GO:0003677">
    <property type="term" value="F:DNA binding"/>
    <property type="evidence" value="ECO:0007669"/>
    <property type="project" value="UniProtKB-KW"/>
</dbReference>
<dbReference type="GO" id="GO:0003700">
    <property type="term" value="F:DNA-binding transcription factor activity"/>
    <property type="evidence" value="ECO:0007669"/>
    <property type="project" value="UniProtKB-UniRule"/>
</dbReference>
<dbReference type="GO" id="GO:0016151">
    <property type="term" value="F:nickel cation binding"/>
    <property type="evidence" value="ECO:0007669"/>
    <property type="project" value="UniProtKB-UniRule"/>
</dbReference>
<dbReference type="GO" id="GO:0010045">
    <property type="term" value="P:response to nickel cation"/>
    <property type="evidence" value="ECO:0007669"/>
    <property type="project" value="InterPro"/>
</dbReference>
<dbReference type="CDD" id="cd22231">
    <property type="entry name" value="RHH_NikR_HicB-like"/>
    <property type="match status" value="1"/>
</dbReference>
<dbReference type="Gene3D" id="3.30.70.1150">
    <property type="entry name" value="ACT-like. Chain A, domain 2"/>
    <property type="match status" value="1"/>
</dbReference>
<dbReference type="Gene3D" id="1.10.1220.10">
    <property type="entry name" value="Met repressor-like"/>
    <property type="match status" value="1"/>
</dbReference>
<dbReference type="HAMAP" id="MF_00476">
    <property type="entry name" value="NikR"/>
    <property type="match status" value="1"/>
</dbReference>
<dbReference type="InterPro" id="IPR027271">
    <property type="entry name" value="Acetolactate_synth/TF_NikR_C"/>
</dbReference>
<dbReference type="InterPro" id="IPR045865">
    <property type="entry name" value="ACT-like_dom_sf"/>
</dbReference>
<dbReference type="InterPro" id="IPR013321">
    <property type="entry name" value="Arc_rbn_hlx_hlx"/>
</dbReference>
<dbReference type="InterPro" id="IPR002145">
    <property type="entry name" value="CopG"/>
</dbReference>
<dbReference type="InterPro" id="IPR050192">
    <property type="entry name" value="CopG/NikR_regulator"/>
</dbReference>
<dbReference type="InterPro" id="IPR022988">
    <property type="entry name" value="Ni_resp_reg_NikR"/>
</dbReference>
<dbReference type="InterPro" id="IPR014160">
    <property type="entry name" value="Nickel_NikR_proteobac"/>
</dbReference>
<dbReference type="InterPro" id="IPR010985">
    <property type="entry name" value="Ribbon_hlx_hlx"/>
</dbReference>
<dbReference type="InterPro" id="IPR014864">
    <property type="entry name" value="TF_NikR_Ni-bd_C"/>
</dbReference>
<dbReference type="NCBIfam" id="TIGR02793">
    <property type="entry name" value="nikR"/>
    <property type="match status" value="1"/>
</dbReference>
<dbReference type="NCBIfam" id="NF002169">
    <property type="entry name" value="PRK01002.1"/>
    <property type="match status" value="1"/>
</dbReference>
<dbReference type="NCBIfam" id="NF002815">
    <property type="entry name" value="PRK02967.1"/>
    <property type="match status" value="1"/>
</dbReference>
<dbReference type="NCBIfam" id="NF003381">
    <property type="entry name" value="PRK04460.1"/>
    <property type="match status" value="1"/>
</dbReference>
<dbReference type="PANTHER" id="PTHR34719">
    <property type="entry name" value="NICKEL-RESPONSIVE REGULATOR"/>
    <property type="match status" value="1"/>
</dbReference>
<dbReference type="PANTHER" id="PTHR34719:SF2">
    <property type="entry name" value="NICKEL-RESPONSIVE REGULATOR"/>
    <property type="match status" value="1"/>
</dbReference>
<dbReference type="Pfam" id="PF08753">
    <property type="entry name" value="NikR_C"/>
    <property type="match status" value="1"/>
</dbReference>
<dbReference type="Pfam" id="PF01402">
    <property type="entry name" value="RHH_1"/>
    <property type="match status" value="1"/>
</dbReference>
<dbReference type="SUPFAM" id="SSF55021">
    <property type="entry name" value="ACT-like"/>
    <property type="match status" value="1"/>
</dbReference>
<dbReference type="SUPFAM" id="SSF47598">
    <property type="entry name" value="Ribbon-helix-helix"/>
    <property type="match status" value="1"/>
</dbReference>
<organism>
    <name type="scientific">Rhodopseudomonas palustris (strain ATCC BAA-98 / CGA009)</name>
    <dbReference type="NCBI Taxonomy" id="258594"/>
    <lineage>
        <taxon>Bacteria</taxon>
        <taxon>Pseudomonadati</taxon>
        <taxon>Pseudomonadota</taxon>
        <taxon>Alphaproteobacteria</taxon>
        <taxon>Hyphomicrobiales</taxon>
        <taxon>Nitrobacteraceae</taxon>
        <taxon>Rhodopseudomonas</taxon>
    </lineage>
</organism>
<sequence>MHRVTITLDDDLMEKLDAIIAARGYQNRSEAIRDLARIGIQQTAAETTSGHCVGAMVYTYDHSKRDLPRKLTQSFHHHHDLSRATMHVHLDHDQCLEVTILDGNATELQHFADHIFAERGVRYGRLVTIPAEPPAEGHEHHHEHDASS</sequence>
<feature type="chain" id="PRO_0000139294" description="Putative nickel-responsive regulator">
    <location>
        <begin position="1"/>
        <end position="148"/>
    </location>
</feature>
<feature type="binding site" evidence="1">
    <location>
        <position position="76"/>
    </location>
    <ligand>
        <name>Ni(2+)</name>
        <dbReference type="ChEBI" id="CHEBI:49786"/>
    </ligand>
</feature>
<feature type="binding site" evidence="1">
    <location>
        <position position="87"/>
    </location>
    <ligand>
        <name>Ni(2+)</name>
        <dbReference type="ChEBI" id="CHEBI:49786"/>
    </ligand>
</feature>
<feature type="binding site" evidence="1">
    <location>
        <position position="89"/>
    </location>
    <ligand>
        <name>Ni(2+)</name>
        <dbReference type="ChEBI" id="CHEBI:49786"/>
    </ligand>
</feature>
<feature type="binding site" evidence="1">
    <location>
        <position position="95"/>
    </location>
    <ligand>
        <name>Ni(2+)</name>
        <dbReference type="ChEBI" id="CHEBI:49786"/>
    </ligand>
</feature>
<evidence type="ECO:0000255" key="1">
    <source>
        <dbReference type="HAMAP-Rule" id="MF_00476"/>
    </source>
</evidence>
<comment type="function">
    <text evidence="1">Transcriptional regulator.</text>
</comment>
<comment type="cofactor">
    <cofactor evidence="1">
        <name>Ni(2+)</name>
        <dbReference type="ChEBI" id="CHEBI:49786"/>
    </cofactor>
    <text evidence="1">Binds 1 nickel ion per subunit.</text>
</comment>
<comment type="similarity">
    <text evidence="1">Belongs to the transcriptional regulatory CopG/NikR family.</text>
</comment>